<accession>Q5HDX7</accession>
<sequence>MKLHELKPAEGSRKERNRVGRGVATGNGKTSGRGHKGQKARSGGGVRPGFEGGQLPLFRRLPKRGFTNINRKEYAIVNLDQLNKFEDGTEVTPALLVESGVVKNEKSGIKILGNGSLDKKLTVKAHKFSASAAEAIDAKGGAHEVI</sequence>
<reference key="1">
    <citation type="journal article" date="2005" name="J. Bacteriol.">
        <title>Insights on evolution of virulence and resistance from the complete genome analysis of an early methicillin-resistant Staphylococcus aureus strain and a biofilm-producing methicillin-resistant Staphylococcus epidermidis strain.</title>
        <authorList>
            <person name="Gill S.R."/>
            <person name="Fouts D.E."/>
            <person name="Archer G.L."/>
            <person name="Mongodin E.F."/>
            <person name="DeBoy R.T."/>
            <person name="Ravel J."/>
            <person name="Paulsen I.T."/>
            <person name="Kolonay J.F."/>
            <person name="Brinkac L.M."/>
            <person name="Beanan M.J."/>
            <person name="Dodson R.J."/>
            <person name="Daugherty S.C."/>
            <person name="Madupu R."/>
            <person name="Angiuoli S.V."/>
            <person name="Durkin A.S."/>
            <person name="Haft D.H."/>
            <person name="Vamathevan J.J."/>
            <person name="Khouri H."/>
            <person name="Utterback T.R."/>
            <person name="Lee C."/>
            <person name="Dimitrov G."/>
            <person name="Jiang L."/>
            <person name="Qin H."/>
            <person name="Weidman J."/>
            <person name="Tran K."/>
            <person name="Kang K.H."/>
            <person name="Hance I.R."/>
            <person name="Nelson K.E."/>
            <person name="Fraser C.M."/>
        </authorList>
    </citation>
    <scope>NUCLEOTIDE SEQUENCE [LARGE SCALE GENOMIC DNA]</scope>
    <source>
        <strain>COL</strain>
    </source>
</reference>
<name>RL15_STAAC</name>
<feature type="chain" id="PRO_0000104808" description="Large ribosomal subunit protein uL15">
    <location>
        <begin position="1"/>
        <end position="146"/>
    </location>
</feature>
<feature type="region of interest" description="Disordered" evidence="2">
    <location>
        <begin position="1"/>
        <end position="54"/>
    </location>
</feature>
<feature type="compositionally biased region" description="Basic and acidic residues" evidence="2">
    <location>
        <begin position="1"/>
        <end position="18"/>
    </location>
</feature>
<feature type="compositionally biased region" description="Gly residues" evidence="2">
    <location>
        <begin position="42"/>
        <end position="52"/>
    </location>
</feature>
<dbReference type="EMBL" id="CP000046">
    <property type="protein sequence ID" value="AAW37095.1"/>
    <property type="molecule type" value="Genomic_DNA"/>
</dbReference>
<dbReference type="RefSeq" id="WP_000766074.1">
    <property type="nucleotide sequence ID" value="NZ_JBGOFO010000004.1"/>
</dbReference>
<dbReference type="SMR" id="Q5HDX7"/>
<dbReference type="GeneID" id="98346543"/>
<dbReference type="KEGG" id="sac:SACOL2220"/>
<dbReference type="HOGENOM" id="CLU_055188_4_2_9"/>
<dbReference type="Proteomes" id="UP000000530">
    <property type="component" value="Chromosome"/>
</dbReference>
<dbReference type="GO" id="GO:0022625">
    <property type="term" value="C:cytosolic large ribosomal subunit"/>
    <property type="evidence" value="ECO:0007669"/>
    <property type="project" value="TreeGrafter"/>
</dbReference>
<dbReference type="GO" id="GO:0019843">
    <property type="term" value="F:rRNA binding"/>
    <property type="evidence" value="ECO:0007669"/>
    <property type="project" value="UniProtKB-UniRule"/>
</dbReference>
<dbReference type="GO" id="GO:0003735">
    <property type="term" value="F:structural constituent of ribosome"/>
    <property type="evidence" value="ECO:0007669"/>
    <property type="project" value="InterPro"/>
</dbReference>
<dbReference type="GO" id="GO:0006412">
    <property type="term" value="P:translation"/>
    <property type="evidence" value="ECO:0007669"/>
    <property type="project" value="UniProtKB-UniRule"/>
</dbReference>
<dbReference type="FunFam" id="3.100.10.10:FF:000004">
    <property type="entry name" value="50S ribosomal protein L15"/>
    <property type="match status" value="1"/>
</dbReference>
<dbReference type="Gene3D" id="3.100.10.10">
    <property type="match status" value="1"/>
</dbReference>
<dbReference type="HAMAP" id="MF_01341">
    <property type="entry name" value="Ribosomal_uL15"/>
    <property type="match status" value="1"/>
</dbReference>
<dbReference type="InterPro" id="IPR030878">
    <property type="entry name" value="Ribosomal_uL15"/>
</dbReference>
<dbReference type="InterPro" id="IPR021131">
    <property type="entry name" value="Ribosomal_uL15/eL18"/>
</dbReference>
<dbReference type="InterPro" id="IPR036227">
    <property type="entry name" value="Ribosomal_uL15/eL18_sf"/>
</dbReference>
<dbReference type="InterPro" id="IPR005749">
    <property type="entry name" value="Ribosomal_uL15_bac-type"/>
</dbReference>
<dbReference type="InterPro" id="IPR001196">
    <property type="entry name" value="Ribosomal_uL15_CS"/>
</dbReference>
<dbReference type="NCBIfam" id="TIGR01071">
    <property type="entry name" value="rplO_bact"/>
    <property type="match status" value="1"/>
</dbReference>
<dbReference type="PANTHER" id="PTHR12934">
    <property type="entry name" value="50S RIBOSOMAL PROTEIN L15"/>
    <property type="match status" value="1"/>
</dbReference>
<dbReference type="PANTHER" id="PTHR12934:SF11">
    <property type="entry name" value="LARGE RIBOSOMAL SUBUNIT PROTEIN UL15M"/>
    <property type="match status" value="1"/>
</dbReference>
<dbReference type="Pfam" id="PF00828">
    <property type="entry name" value="Ribosomal_L27A"/>
    <property type="match status" value="1"/>
</dbReference>
<dbReference type="SUPFAM" id="SSF52080">
    <property type="entry name" value="Ribosomal proteins L15p and L18e"/>
    <property type="match status" value="1"/>
</dbReference>
<dbReference type="PROSITE" id="PS00475">
    <property type="entry name" value="RIBOSOMAL_L15"/>
    <property type="match status" value="1"/>
</dbReference>
<gene>
    <name evidence="1" type="primary">rplO</name>
    <name type="ordered locus">SACOL2220</name>
</gene>
<evidence type="ECO:0000255" key="1">
    <source>
        <dbReference type="HAMAP-Rule" id="MF_01341"/>
    </source>
</evidence>
<evidence type="ECO:0000256" key="2">
    <source>
        <dbReference type="SAM" id="MobiDB-lite"/>
    </source>
</evidence>
<evidence type="ECO:0000305" key="3"/>
<keyword id="KW-0687">Ribonucleoprotein</keyword>
<keyword id="KW-0689">Ribosomal protein</keyword>
<keyword id="KW-0694">RNA-binding</keyword>
<keyword id="KW-0699">rRNA-binding</keyword>
<proteinExistence type="inferred from homology"/>
<comment type="function">
    <text evidence="1">Binds to the 23S rRNA.</text>
</comment>
<comment type="subunit">
    <text evidence="1">Part of the 50S ribosomal subunit.</text>
</comment>
<comment type="similarity">
    <text evidence="1">Belongs to the universal ribosomal protein uL15 family.</text>
</comment>
<organism>
    <name type="scientific">Staphylococcus aureus (strain COL)</name>
    <dbReference type="NCBI Taxonomy" id="93062"/>
    <lineage>
        <taxon>Bacteria</taxon>
        <taxon>Bacillati</taxon>
        <taxon>Bacillota</taxon>
        <taxon>Bacilli</taxon>
        <taxon>Bacillales</taxon>
        <taxon>Staphylococcaceae</taxon>
        <taxon>Staphylococcus</taxon>
    </lineage>
</organism>
<protein>
    <recommendedName>
        <fullName evidence="1">Large ribosomal subunit protein uL15</fullName>
    </recommendedName>
    <alternativeName>
        <fullName evidence="3">50S ribosomal protein L15</fullName>
    </alternativeName>
</protein>